<sequence length="29" mass="3198">SQXPQSETDYSQLSGEWNTIYGAASNIXK</sequence>
<dbReference type="STRING" id="9796.ENSECAP00000046151"/>
<dbReference type="Allergome" id="332">
    <property type="allergen name" value="Equ c 2"/>
</dbReference>
<dbReference type="Allergome" id="333">
    <property type="allergen name" value="Equ c 2.0101"/>
</dbReference>
<dbReference type="PaxDb" id="9796-ENSECAP00000046151"/>
<dbReference type="InParanoid" id="P81216"/>
<dbReference type="Proteomes" id="UP000002281">
    <property type="component" value="Unplaced"/>
</dbReference>
<dbReference type="GO" id="GO:0005576">
    <property type="term" value="C:extracellular region"/>
    <property type="evidence" value="ECO:0007669"/>
    <property type="project" value="UniProtKB-SubCell"/>
</dbReference>
<accession>P81216</accession>
<evidence type="ECO:0000269" key="1">
    <source>
    </source>
</evidence>
<evidence type="ECO:0000269" key="2">
    <source>
    </source>
</evidence>
<evidence type="ECO:0000305" key="3"/>
<feature type="chain" id="PRO_0000201032" description="Dander allergen Equ c 2.0101">
    <location>
        <begin position="1"/>
        <end position="29" status="greater than"/>
    </location>
</feature>
<feature type="non-terminal residue">
    <location>
        <position position="29"/>
    </location>
</feature>
<name>ALL21_HORSE</name>
<reference key="1">
    <citation type="journal article" date="1998" name="Eur. J. Biochem.">
        <title>Separation of horse dander allergen proteins by two-dimensional electrophoresis -- molecular characterisation and identification of Equ c 2.0101 and Equ c 2.0102 as lipocalin proteins.</title>
        <authorList>
            <person name="Bulone V."/>
            <person name="Krogstad-Johnsen T."/>
            <person name="Smestad-Paulsen B."/>
        </authorList>
    </citation>
    <scope>PROTEIN SEQUENCE</scope>
    <scope>ALLERGEN</scope>
    <source>
        <tissue>Skin</tissue>
    </source>
</reference>
<reference key="2">
    <citation type="journal article" date="2001" name="Eur. J. Biochem.">
        <title>Biochemical characterization and surfactant properties of horse allergens.</title>
        <authorList>
            <person name="Goubran Botros H."/>
            <person name="Poncet P."/>
            <person name="Rabillon J."/>
            <person name="Fontaine T."/>
            <person name="Laval J.-M."/>
            <person name="David B."/>
        </authorList>
    </citation>
    <scope>MASS SPECTROMETRY</scope>
    <source>
        <tissue>Dander</tissue>
    </source>
</reference>
<comment type="subcellular location">
    <subcellularLocation>
        <location evidence="3">Secreted</location>
    </subcellularLocation>
</comment>
<comment type="mass spectrometry" mass="16000.0" method="Electrospray" evidence="1"/>
<comment type="allergen">
    <text evidence="2">Causes an allergic reaction in human. Potent allergen of horse dander.</text>
</comment>
<comment type="similarity">
    <text evidence="3">Belongs to the calycin superfamily. Lipocalin family.</text>
</comment>
<comment type="caution">
    <text evidence="3">Equ c 2.0101 and c 2.0102 might be two variants of the same protein.</text>
</comment>
<keyword id="KW-0020">Allergen</keyword>
<keyword id="KW-0903">Direct protein sequencing</keyword>
<keyword id="KW-1185">Reference proteome</keyword>
<keyword id="KW-0964">Secreted</keyword>
<keyword id="KW-0813">Transport</keyword>
<proteinExistence type="evidence at protein level"/>
<protein>
    <recommendedName>
        <fullName>Dander allergen Equ c 2.0101</fullName>
    </recommendedName>
    <allergenName>Equ c 2.0101</allergenName>
</protein>
<organism>
    <name type="scientific">Equus caballus</name>
    <name type="common">Horse</name>
    <dbReference type="NCBI Taxonomy" id="9796"/>
    <lineage>
        <taxon>Eukaryota</taxon>
        <taxon>Metazoa</taxon>
        <taxon>Chordata</taxon>
        <taxon>Craniata</taxon>
        <taxon>Vertebrata</taxon>
        <taxon>Euteleostomi</taxon>
        <taxon>Mammalia</taxon>
        <taxon>Eutheria</taxon>
        <taxon>Laurasiatheria</taxon>
        <taxon>Perissodactyla</taxon>
        <taxon>Equidae</taxon>
        <taxon>Equus</taxon>
    </lineage>
</organism>